<reference key="1">
    <citation type="journal article" date="2008" name="ISME J.">
        <title>Comparative genomics of two ecotypes of the marine planktonic copiotroph Alteromonas macleodii suggests alternative lifestyles associated with different kinds of particulate organic matter.</title>
        <authorList>
            <person name="Ivars-Martinez E."/>
            <person name="Martin-Cuadrado A.-B."/>
            <person name="D'Auria G."/>
            <person name="Mira A."/>
            <person name="Ferriera S."/>
            <person name="Johnson J."/>
            <person name="Friedman R."/>
            <person name="Rodriguez-Valera F."/>
        </authorList>
    </citation>
    <scope>NUCLEOTIDE SEQUENCE [LARGE SCALE GENOMIC DNA]</scope>
    <source>
        <strain>DSM 17117 / CIP 110805 / LMG 28347 / Deep ecotype</strain>
    </source>
</reference>
<dbReference type="EC" id="2.1.1.191" evidence="1"/>
<dbReference type="EMBL" id="CP001103">
    <property type="protein sequence ID" value="AEA97850.1"/>
    <property type="molecule type" value="Genomic_DNA"/>
</dbReference>
<dbReference type="RefSeq" id="WP_012518182.1">
    <property type="nucleotide sequence ID" value="NC_011138.3"/>
</dbReference>
<dbReference type="SMR" id="B4RRY8"/>
<dbReference type="KEGG" id="amc:MADE_1008550"/>
<dbReference type="HOGENOM" id="CLU_014042_0_0_6"/>
<dbReference type="Proteomes" id="UP000001870">
    <property type="component" value="Chromosome"/>
</dbReference>
<dbReference type="GO" id="GO:0005737">
    <property type="term" value="C:cytoplasm"/>
    <property type="evidence" value="ECO:0007669"/>
    <property type="project" value="UniProtKB-SubCell"/>
</dbReference>
<dbReference type="GO" id="GO:0003723">
    <property type="term" value="F:RNA binding"/>
    <property type="evidence" value="ECO:0007669"/>
    <property type="project" value="UniProtKB-KW"/>
</dbReference>
<dbReference type="GO" id="GO:0016434">
    <property type="term" value="F:rRNA (cytosine) methyltransferase activity"/>
    <property type="evidence" value="ECO:0007669"/>
    <property type="project" value="UniProtKB-UniRule"/>
</dbReference>
<dbReference type="CDD" id="cd02440">
    <property type="entry name" value="AdoMet_MTases"/>
    <property type="match status" value="1"/>
</dbReference>
<dbReference type="CDD" id="cd21153">
    <property type="entry name" value="PUA_RlmI"/>
    <property type="match status" value="1"/>
</dbReference>
<dbReference type="CDD" id="cd11572">
    <property type="entry name" value="RlmI_M_like"/>
    <property type="match status" value="1"/>
</dbReference>
<dbReference type="Gene3D" id="2.30.130.10">
    <property type="entry name" value="PUA domain"/>
    <property type="match status" value="1"/>
</dbReference>
<dbReference type="Gene3D" id="3.30.750.80">
    <property type="entry name" value="RNA methyltransferase domain (HRMD) like"/>
    <property type="match status" value="1"/>
</dbReference>
<dbReference type="Gene3D" id="3.40.50.150">
    <property type="entry name" value="Vaccinia Virus protein VP39"/>
    <property type="match status" value="1"/>
</dbReference>
<dbReference type="HAMAP" id="MF_01857">
    <property type="entry name" value="23SrRNA_methyltr_I"/>
    <property type="match status" value="1"/>
</dbReference>
<dbReference type="InterPro" id="IPR002478">
    <property type="entry name" value="PUA"/>
</dbReference>
<dbReference type="InterPro" id="IPR015947">
    <property type="entry name" value="PUA-like_sf"/>
</dbReference>
<dbReference type="InterPro" id="IPR036974">
    <property type="entry name" value="PUA_sf"/>
</dbReference>
<dbReference type="InterPro" id="IPR023542">
    <property type="entry name" value="RLMI"/>
</dbReference>
<dbReference type="InterPro" id="IPR041532">
    <property type="entry name" value="RlmI-like_PUA"/>
</dbReference>
<dbReference type="InterPro" id="IPR019614">
    <property type="entry name" value="SAM-dep_methyl-trfase"/>
</dbReference>
<dbReference type="InterPro" id="IPR029063">
    <property type="entry name" value="SAM-dependent_MTases_sf"/>
</dbReference>
<dbReference type="PANTHER" id="PTHR42873">
    <property type="entry name" value="RIBOSOMAL RNA LARGE SUBUNIT METHYLTRANSFERASE"/>
    <property type="match status" value="1"/>
</dbReference>
<dbReference type="PANTHER" id="PTHR42873:SF1">
    <property type="entry name" value="S-ADENOSYLMETHIONINE-DEPENDENT METHYLTRANSFERASE DOMAIN-CONTAINING PROTEIN"/>
    <property type="match status" value="1"/>
</dbReference>
<dbReference type="Pfam" id="PF10672">
    <property type="entry name" value="Methyltrans_SAM"/>
    <property type="match status" value="1"/>
</dbReference>
<dbReference type="Pfam" id="PF17785">
    <property type="entry name" value="PUA_3"/>
    <property type="match status" value="1"/>
</dbReference>
<dbReference type="SMART" id="SM00359">
    <property type="entry name" value="PUA"/>
    <property type="match status" value="1"/>
</dbReference>
<dbReference type="SUPFAM" id="SSF88697">
    <property type="entry name" value="PUA domain-like"/>
    <property type="match status" value="1"/>
</dbReference>
<dbReference type="SUPFAM" id="SSF53335">
    <property type="entry name" value="S-adenosyl-L-methionine-dependent methyltransferases"/>
    <property type="match status" value="1"/>
</dbReference>
<dbReference type="PROSITE" id="PS50890">
    <property type="entry name" value="PUA"/>
    <property type="match status" value="1"/>
</dbReference>
<sequence length="397" mass="44246">MSAQVILQPSRDKSLRRKHPWVFESAVAELKGRARIGDTVDVFDDEGDWLGRGAYSPHSKIRVRMWTFKKDESIDNGFFLRRLETALALRKRLFDPNKTNAFRWIASESDGLPGVTIDLYDNVAVVQLLSAGGEKHRDKIVWAITKLMPDVHVYERSDVDVRKKEGLEPVTGVLHGQPPTQVTVKENGINIVVDIESGHKTGFYLDQRDSRAAAAHYAKDADVLNCFSYTGTFSCYALSGGAKSVTNVDVSQPALDLAKHHVAINGFDDKRTQYLNKDVFKALREYHEQNKQFDMVILDPPKFVDNKASLNRAARGYKDINMYGIHAVKSGGLLLTFSCSGLMPADLFQKVVADAALDAGRTIKIIARLNQASDHPIIGSYPEGYYLKGLVCEVTDD</sequence>
<organism>
    <name type="scientific">Alteromonas mediterranea (strain DSM 17117 / CIP 110805 / LMG 28347 / Deep ecotype)</name>
    <dbReference type="NCBI Taxonomy" id="1774373"/>
    <lineage>
        <taxon>Bacteria</taxon>
        <taxon>Pseudomonadati</taxon>
        <taxon>Pseudomonadota</taxon>
        <taxon>Gammaproteobacteria</taxon>
        <taxon>Alteromonadales</taxon>
        <taxon>Alteromonadaceae</taxon>
        <taxon>Alteromonas/Salinimonas group</taxon>
        <taxon>Alteromonas</taxon>
    </lineage>
</organism>
<comment type="function">
    <text evidence="1">Specifically methylates the cytosine at position 1962 (m5C1962) of 23S rRNA.</text>
</comment>
<comment type="catalytic activity">
    <reaction evidence="1">
        <text>cytidine(1962) in 23S rRNA + S-adenosyl-L-methionine = 5-methylcytidine(1962) in 23S rRNA + S-adenosyl-L-homocysteine + H(+)</text>
        <dbReference type="Rhea" id="RHEA:42912"/>
        <dbReference type="Rhea" id="RHEA-COMP:10382"/>
        <dbReference type="Rhea" id="RHEA-COMP:10386"/>
        <dbReference type="ChEBI" id="CHEBI:15378"/>
        <dbReference type="ChEBI" id="CHEBI:57856"/>
        <dbReference type="ChEBI" id="CHEBI:59789"/>
        <dbReference type="ChEBI" id="CHEBI:74483"/>
        <dbReference type="ChEBI" id="CHEBI:82748"/>
        <dbReference type="EC" id="2.1.1.191"/>
    </reaction>
</comment>
<comment type="subcellular location">
    <subcellularLocation>
        <location evidence="1">Cytoplasm</location>
    </subcellularLocation>
</comment>
<comment type="similarity">
    <text evidence="1">Belongs to the methyltransferase superfamily. RlmI family.</text>
</comment>
<keyword id="KW-0963">Cytoplasm</keyword>
<keyword id="KW-0489">Methyltransferase</keyword>
<keyword id="KW-0694">RNA-binding</keyword>
<keyword id="KW-0698">rRNA processing</keyword>
<keyword id="KW-0949">S-adenosyl-L-methionine</keyword>
<keyword id="KW-0808">Transferase</keyword>
<accession>B4RRY8</accession>
<accession>F2G9H1</accession>
<name>RLMI_ALTMD</name>
<evidence type="ECO:0000255" key="1">
    <source>
        <dbReference type="HAMAP-Rule" id="MF_01857"/>
    </source>
</evidence>
<protein>
    <recommendedName>
        <fullName evidence="1">Ribosomal RNA large subunit methyltransferase I</fullName>
        <ecNumber evidence="1">2.1.1.191</ecNumber>
    </recommendedName>
    <alternativeName>
        <fullName evidence="1">23S rRNA m5C1962 methyltransferase</fullName>
    </alternativeName>
    <alternativeName>
        <fullName evidence="1">rRNA (cytosine-C(5)-)-methyltransferase RlmI</fullName>
    </alternativeName>
</protein>
<proteinExistence type="inferred from homology"/>
<feature type="chain" id="PRO_0000366217" description="Ribosomal RNA large subunit methyltransferase I">
    <location>
        <begin position="1"/>
        <end position="397"/>
    </location>
</feature>
<feature type="domain" description="PUA" evidence="1">
    <location>
        <begin position="2"/>
        <end position="81"/>
    </location>
</feature>
<gene>
    <name evidence="1" type="primary">rlmI</name>
    <name type="ordered locus">MADE_1008550</name>
</gene>